<gene>
    <name evidence="1" type="primary">plsY</name>
    <name type="synonym">ygiH</name>
    <name type="ordered locus">SNSL254_A3467</name>
</gene>
<name>PLSY_SALNS</name>
<reference key="1">
    <citation type="journal article" date="2011" name="J. Bacteriol.">
        <title>Comparative genomics of 28 Salmonella enterica isolates: evidence for CRISPR-mediated adaptive sublineage evolution.</title>
        <authorList>
            <person name="Fricke W.F."/>
            <person name="Mammel M.K."/>
            <person name="McDermott P.F."/>
            <person name="Tartera C."/>
            <person name="White D.G."/>
            <person name="Leclerc J.E."/>
            <person name="Ravel J."/>
            <person name="Cebula T.A."/>
        </authorList>
    </citation>
    <scope>NUCLEOTIDE SEQUENCE [LARGE SCALE GENOMIC DNA]</scope>
    <source>
        <strain>SL254</strain>
    </source>
</reference>
<keyword id="KW-0997">Cell inner membrane</keyword>
<keyword id="KW-1003">Cell membrane</keyword>
<keyword id="KW-0444">Lipid biosynthesis</keyword>
<keyword id="KW-0443">Lipid metabolism</keyword>
<keyword id="KW-0472">Membrane</keyword>
<keyword id="KW-0594">Phospholipid biosynthesis</keyword>
<keyword id="KW-1208">Phospholipid metabolism</keyword>
<keyword id="KW-0808">Transferase</keyword>
<keyword id="KW-0812">Transmembrane</keyword>
<keyword id="KW-1133">Transmembrane helix</keyword>
<protein>
    <recommendedName>
        <fullName evidence="1">Glycerol-3-phosphate acyltransferase</fullName>
    </recommendedName>
    <alternativeName>
        <fullName evidence="1">G3P acyltransferase</fullName>
        <shortName evidence="1">GPAT</shortName>
        <ecNumber evidence="1">2.3.1.15</ecNumber>
        <ecNumber evidence="1">2.3.1.n5</ecNumber>
    </alternativeName>
    <alternativeName>
        <fullName evidence="1">Lysophosphatidic acid synthase</fullName>
        <shortName evidence="1">LPA synthase</shortName>
    </alternativeName>
</protein>
<organism>
    <name type="scientific">Salmonella newport (strain SL254)</name>
    <dbReference type="NCBI Taxonomy" id="423368"/>
    <lineage>
        <taxon>Bacteria</taxon>
        <taxon>Pseudomonadati</taxon>
        <taxon>Pseudomonadota</taxon>
        <taxon>Gammaproteobacteria</taxon>
        <taxon>Enterobacterales</taxon>
        <taxon>Enterobacteriaceae</taxon>
        <taxon>Salmonella</taxon>
    </lineage>
</organism>
<sequence>MSAIAPGMILFAYLCGSISSAILVCRIAGLPDPRESGSGNPGATNVLRIGGKGAAVAVLIFDILKGMLPVWGAYALGVTPFWLGLIAIAACLGHIWPVFFGFKGGKGVATAFGAIAPIGWDLTGVMAGTWLLTVLLSGYSSLGAIVSALIAPFYVWWFKPQFTFPVSMLSCLILLRHHDNIQRLWRRQETKIWTKLKKKRQKD</sequence>
<evidence type="ECO:0000255" key="1">
    <source>
        <dbReference type="HAMAP-Rule" id="MF_01043"/>
    </source>
</evidence>
<accession>B4T677</accession>
<comment type="function">
    <text evidence="1">Catalyzes the transfer of an acyl group from acyl-ACP to glycerol-3-phosphate (G3P) to form lysophosphatidic acid (LPA). This enzyme can also utilize acyl-CoA as fatty acyl donor, but not acyl-PO(4).</text>
</comment>
<comment type="catalytic activity">
    <reaction evidence="1">
        <text>sn-glycerol 3-phosphate + an acyl-CoA = a 1-acyl-sn-glycero-3-phosphate + CoA</text>
        <dbReference type="Rhea" id="RHEA:15325"/>
        <dbReference type="ChEBI" id="CHEBI:57287"/>
        <dbReference type="ChEBI" id="CHEBI:57597"/>
        <dbReference type="ChEBI" id="CHEBI:57970"/>
        <dbReference type="ChEBI" id="CHEBI:58342"/>
        <dbReference type="EC" id="2.3.1.15"/>
    </reaction>
</comment>
<comment type="catalytic activity">
    <reaction evidence="1">
        <text>a fatty acyl-[ACP] + sn-glycerol 3-phosphate = a 1-acyl-sn-glycero-3-phosphate + holo-[ACP]</text>
        <dbReference type="Rhea" id="RHEA:42300"/>
        <dbReference type="Rhea" id="RHEA-COMP:9685"/>
        <dbReference type="Rhea" id="RHEA-COMP:14125"/>
        <dbReference type="ChEBI" id="CHEBI:57597"/>
        <dbReference type="ChEBI" id="CHEBI:57970"/>
        <dbReference type="ChEBI" id="CHEBI:64479"/>
        <dbReference type="ChEBI" id="CHEBI:138651"/>
        <dbReference type="EC" id="2.3.1.n5"/>
    </reaction>
</comment>
<comment type="pathway">
    <text evidence="1">Lipid metabolism; phospholipid metabolism.</text>
</comment>
<comment type="subunit">
    <text evidence="1">Probably interacts with PlsX.</text>
</comment>
<comment type="subcellular location">
    <subcellularLocation>
        <location evidence="1">Cell inner membrane</location>
        <topology evidence="1">Multi-pass membrane protein</topology>
    </subcellularLocation>
</comment>
<comment type="similarity">
    <text evidence="1">Belongs to the PlsY family.</text>
</comment>
<feature type="chain" id="PRO_1000136119" description="Glycerol-3-phosphate acyltransferase">
    <location>
        <begin position="1"/>
        <end position="203"/>
    </location>
</feature>
<feature type="topological domain" description="Periplasmic" evidence="1">
    <location>
        <begin position="1"/>
        <end position="3"/>
    </location>
</feature>
<feature type="transmembrane region" description="Helical" evidence="1">
    <location>
        <begin position="4"/>
        <end position="24"/>
    </location>
</feature>
<feature type="topological domain" description="Cytoplasmic" evidence="1">
    <location>
        <begin position="25"/>
        <end position="52"/>
    </location>
</feature>
<feature type="transmembrane region" description="Helical" evidence="1">
    <location>
        <begin position="53"/>
        <end position="73"/>
    </location>
</feature>
<feature type="topological domain" description="Periplasmic" evidence="1">
    <location>
        <begin position="74"/>
        <end position="80"/>
    </location>
</feature>
<feature type="transmembrane region" description="Helical" evidence="1">
    <location>
        <begin position="81"/>
        <end position="101"/>
    </location>
</feature>
<feature type="topological domain" description="Cytoplasmic" evidence="1">
    <location>
        <begin position="102"/>
        <end position="111"/>
    </location>
</feature>
<feature type="transmembrane region" description="Helical" evidence="1">
    <location>
        <begin position="112"/>
        <end position="132"/>
    </location>
</feature>
<feature type="topological domain" description="Periplasmic" evidence="1">
    <location>
        <begin position="133"/>
        <end position="137"/>
    </location>
</feature>
<feature type="transmembrane region" description="Helical" evidence="1">
    <location>
        <begin position="138"/>
        <end position="158"/>
    </location>
</feature>
<feature type="topological domain" description="Cytoplasmic" evidence="1">
    <location>
        <begin position="159"/>
        <end position="203"/>
    </location>
</feature>
<proteinExistence type="inferred from homology"/>
<dbReference type="EC" id="2.3.1.15" evidence="1"/>
<dbReference type="EC" id="2.3.1.n5" evidence="1"/>
<dbReference type="EMBL" id="CP001113">
    <property type="protein sequence ID" value="ACF61152.1"/>
    <property type="molecule type" value="Genomic_DNA"/>
</dbReference>
<dbReference type="RefSeq" id="WP_001272784.1">
    <property type="nucleotide sequence ID" value="NZ_CCMR01000001.1"/>
</dbReference>
<dbReference type="SMR" id="B4T677"/>
<dbReference type="KEGG" id="see:SNSL254_A3467"/>
<dbReference type="HOGENOM" id="CLU_081254_0_2_6"/>
<dbReference type="UniPathway" id="UPA00085"/>
<dbReference type="Proteomes" id="UP000008824">
    <property type="component" value="Chromosome"/>
</dbReference>
<dbReference type="GO" id="GO:0005886">
    <property type="term" value="C:plasma membrane"/>
    <property type="evidence" value="ECO:0007669"/>
    <property type="project" value="UniProtKB-SubCell"/>
</dbReference>
<dbReference type="GO" id="GO:0043772">
    <property type="term" value="F:acyl-phosphate glycerol-3-phosphate acyltransferase activity"/>
    <property type="evidence" value="ECO:0007669"/>
    <property type="project" value="InterPro"/>
</dbReference>
<dbReference type="GO" id="GO:0004366">
    <property type="term" value="F:glycerol-3-phosphate O-acyltransferase activity"/>
    <property type="evidence" value="ECO:0007669"/>
    <property type="project" value="UniProtKB-UniRule"/>
</dbReference>
<dbReference type="GO" id="GO:0008654">
    <property type="term" value="P:phospholipid biosynthetic process"/>
    <property type="evidence" value="ECO:0007669"/>
    <property type="project" value="UniProtKB-UniRule"/>
</dbReference>
<dbReference type="HAMAP" id="MF_01043">
    <property type="entry name" value="PlsY"/>
    <property type="match status" value="1"/>
</dbReference>
<dbReference type="InterPro" id="IPR003811">
    <property type="entry name" value="G3P_acylTferase_PlsY"/>
</dbReference>
<dbReference type="NCBIfam" id="TIGR00023">
    <property type="entry name" value="glycerol-3-phosphate 1-O-acyltransferase PlsY"/>
    <property type="match status" value="1"/>
</dbReference>
<dbReference type="PANTHER" id="PTHR30309:SF0">
    <property type="entry name" value="GLYCEROL-3-PHOSPHATE ACYLTRANSFERASE-RELATED"/>
    <property type="match status" value="1"/>
</dbReference>
<dbReference type="PANTHER" id="PTHR30309">
    <property type="entry name" value="INNER MEMBRANE PROTEIN YGIH"/>
    <property type="match status" value="1"/>
</dbReference>
<dbReference type="Pfam" id="PF02660">
    <property type="entry name" value="G3P_acyltransf"/>
    <property type="match status" value="1"/>
</dbReference>
<dbReference type="SMART" id="SM01207">
    <property type="entry name" value="G3P_acyltransf"/>
    <property type="match status" value="1"/>
</dbReference>